<evidence type="ECO:0000255" key="1">
    <source>
        <dbReference type="HAMAP-Rule" id="MF_00682"/>
    </source>
</evidence>
<organism>
    <name type="scientific">Mannheimia succiniciproducens (strain KCTC 0769BP / MBEL55E)</name>
    <dbReference type="NCBI Taxonomy" id="221988"/>
    <lineage>
        <taxon>Bacteria</taxon>
        <taxon>Pseudomonadati</taxon>
        <taxon>Pseudomonadota</taxon>
        <taxon>Gammaproteobacteria</taxon>
        <taxon>Pasteurellales</taxon>
        <taxon>Pasteurellaceae</taxon>
        <taxon>Basfia</taxon>
    </lineage>
</organism>
<proteinExistence type="inferred from homology"/>
<gene>
    <name evidence="1" type="primary">hscB</name>
    <name type="ordered locus">MS1722</name>
</gene>
<reference key="1">
    <citation type="journal article" date="2004" name="Nat. Biotechnol.">
        <title>The genome sequence of the capnophilic rumen bacterium Mannheimia succiniciproducens.</title>
        <authorList>
            <person name="Hong S.H."/>
            <person name="Kim J.S."/>
            <person name="Lee S.Y."/>
            <person name="In Y.H."/>
            <person name="Choi S.S."/>
            <person name="Rih J.-K."/>
            <person name="Kim C.H."/>
            <person name="Jeong H."/>
            <person name="Hur C.G."/>
            <person name="Kim J.J."/>
        </authorList>
    </citation>
    <scope>NUCLEOTIDE SEQUENCE [LARGE SCALE GENOMIC DNA]</scope>
    <source>
        <strain>KCTC 0769BP / MBEL55E</strain>
    </source>
</reference>
<dbReference type="EMBL" id="AE016827">
    <property type="protein sequence ID" value="AAU38329.1"/>
    <property type="molecule type" value="Genomic_DNA"/>
</dbReference>
<dbReference type="RefSeq" id="WP_011200890.1">
    <property type="nucleotide sequence ID" value="NC_006300.1"/>
</dbReference>
<dbReference type="SMR" id="Q65RT1"/>
<dbReference type="STRING" id="221988.MS1722"/>
<dbReference type="KEGG" id="msu:MS1722"/>
<dbReference type="eggNOG" id="COG1076">
    <property type="taxonomic scope" value="Bacteria"/>
</dbReference>
<dbReference type="HOGENOM" id="CLU_068529_2_0_6"/>
<dbReference type="OrthoDB" id="287587at2"/>
<dbReference type="Proteomes" id="UP000000607">
    <property type="component" value="Chromosome"/>
</dbReference>
<dbReference type="GO" id="GO:1990230">
    <property type="term" value="C:iron-sulfur cluster transfer complex"/>
    <property type="evidence" value="ECO:0007669"/>
    <property type="project" value="TreeGrafter"/>
</dbReference>
<dbReference type="GO" id="GO:0001671">
    <property type="term" value="F:ATPase activator activity"/>
    <property type="evidence" value="ECO:0007669"/>
    <property type="project" value="InterPro"/>
</dbReference>
<dbReference type="GO" id="GO:0051087">
    <property type="term" value="F:protein-folding chaperone binding"/>
    <property type="evidence" value="ECO:0007669"/>
    <property type="project" value="InterPro"/>
</dbReference>
<dbReference type="GO" id="GO:0044571">
    <property type="term" value="P:[2Fe-2S] cluster assembly"/>
    <property type="evidence" value="ECO:0007669"/>
    <property type="project" value="InterPro"/>
</dbReference>
<dbReference type="GO" id="GO:0051259">
    <property type="term" value="P:protein complex oligomerization"/>
    <property type="evidence" value="ECO:0007669"/>
    <property type="project" value="InterPro"/>
</dbReference>
<dbReference type="GO" id="GO:0006457">
    <property type="term" value="P:protein folding"/>
    <property type="evidence" value="ECO:0007669"/>
    <property type="project" value="UniProtKB-UniRule"/>
</dbReference>
<dbReference type="CDD" id="cd06257">
    <property type="entry name" value="DnaJ"/>
    <property type="match status" value="1"/>
</dbReference>
<dbReference type="Gene3D" id="1.10.287.110">
    <property type="entry name" value="DnaJ domain"/>
    <property type="match status" value="1"/>
</dbReference>
<dbReference type="Gene3D" id="1.20.1280.20">
    <property type="entry name" value="HscB, C-terminal domain"/>
    <property type="match status" value="1"/>
</dbReference>
<dbReference type="HAMAP" id="MF_00682">
    <property type="entry name" value="HscB"/>
    <property type="match status" value="1"/>
</dbReference>
<dbReference type="InterPro" id="IPR001623">
    <property type="entry name" value="DnaJ_domain"/>
</dbReference>
<dbReference type="InterPro" id="IPR004640">
    <property type="entry name" value="HscB"/>
</dbReference>
<dbReference type="InterPro" id="IPR036386">
    <property type="entry name" value="HscB_C_sf"/>
</dbReference>
<dbReference type="InterPro" id="IPR009073">
    <property type="entry name" value="HscB_oligo_C"/>
</dbReference>
<dbReference type="InterPro" id="IPR036869">
    <property type="entry name" value="J_dom_sf"/>
</dbReference>
<dbReference type="NCBIfam" id="TIGR00714">
    <property type="entry name" value="hscB"/>
    <property type="match status" value="1"/>
</dbReference>
<dbReference type="PANTHER" id="PTHR14021">
    <property type="entry name" value="IRON-SULFUR CLUSTER CO-CHAPERONE PROTEIN HSCB"/>
    <property type="match status" value="1"/>
</dbReference>
<dbReference type="PANTHER" id="PTHR14021:SF15">
    <property type="entry name" value="IRON-SULFUR CLUSTER CO-CHAPERONE PROTEIN HSCB"/>
    <property type="match status" value="1"/>
</dbReference>
<dbReference type="Pfam" id="PF07743">
    <property type="entry name" value="HSCB_C"/>
    <property type="match status" value="1"/>
</dbReference>
<dbReference type="SMART" id="SM00271">
    <property type="entry name" value="DnaJ"/>
    <property type="match status" value="1"/>
</dbReference>
<dbReference type="SUPFAM" id="SSF46565">
    <property type="entry name" value="Chaperone J-domain"/>
    <property type="match status" value="1"/>
</dbReference>
<dbReference type="SUPFAM" id="SSF47144">
    <property type="entry name" value="HSC20 (HSCB), C-terminal oligomerisation domain"/>
    <property type="match status" value="1"/>
</dbReference>
<keyword id="KW-0143">Chaperone</keyword>
<sequence length="173" mass="20156">MNNPFALFDLPIEFQLDQNRLSERYLALQKALHPDNFANSSAQEQRLAMQKSAEVNDALQILKDPILRADCIIALNTGEQQNTEEKSTQDMAFLMQQMQWREQLEEIENTQDIDGLMTFSAEIEQSNKEKISEISTALSMKDWQQAKLINDRLRFIKKLMTEIERIEDKLADF</sequence>
<comment type="function">
    <text evidence="1">Co-chaperone involved in the maturation of iron-sulfur cluster-containing proteins. Seems to help targeting proteins to be folded toward HscA.</text>
</comment>
<comment type="subunit">
    <text evidence="1">Interacts with HscA and stimulates its ATPase activity.</text>
</comment>
<comment type="similarity">
    <text evidence="1">Belongs to the HscB family.</text>
</comment>
<accession>Q65RT1</accession>
<name>HSCB_MANSM</name>
<feature type="chain" id="PRO_0000070972" description="Co-chaperone protein HscB homolog">
    <location>
        <begin position="1"/>
        <end position="173"/>
    </location>
</feature>
<feature type="domain" description="J" evidence="1">
    <location>
        <begin position="3"/>
        <end position="75"/>
    </location>
</feature>
<protein>
    <recommendedName>
        <fullName evidence="1">Co-chaperone protein HscB homolog</fullName>
    </recommendedName>
</protein>